<sequence>MNQIRQAPAASASNATESKQEIRNYTMNFGPQHPAAHGVLRLILEMDGETVVRADPHIGLLHRGTEKLAESKPFNQSIGYMDRLDYVSMMCNEHAYVRAIETLIGIQAPERAQYIRTMFDEITRILNHLMWLGSNALDLGAMAVMLYAFREREELMDVYEAISGARMHAAYYRPGGVYRDLPDTMPKYKESRWHKGKALKRLNAAREGSMLDFLEHFTDTFPQRIDEYETLLTDNRIWKQRTVGVGVIEPDVAKAWGMTGVMLRGSGIAWDLRKKQPYAKYDAVDFDIPLGTCGDCYDRYLCRVAEMRESNRIIKQCVQWLKMNPGQVMVENCKVAPPKRESMKDDMEALIHHFKLFSEGYCVPAGETYSAVEAPKGEFGCYLISDGANKPFRVHLRAPGFAHLSSMDAVVRGYMLADVVAMIGTYDLVFGEVDR</sequence>
<comment type="function">
    <text evidence="1">NDH-1 shuttles electrons from NADH, via FMN and iron-sulfur (Fe-S) centers, to quinones in the respiratory chain. The immediate electron acceptor for the enzyme in this species is believed to be ubiquinone. Couples the redox reaction to proton translocation (for every two electrons transferred, four hydrogen ions are translocated across the cytoplasmic membrane), and thus conserves the redox energy in a proton gradient.</text>
</comment>
<comment type="catalytic activity">
    <reaction evidence="1">
        <text>a quinone + NADH + 5 H(+)(in) = a quinol + NAD(+) + 4 H(+)(out)</text>
        <dbReference type="Rhea" id="RHEA:57888"/>
        <dbReference type="ChEBI" id="CHEBI:15378"/>
        <dbReference type="ChEBI" id="CHEBI:24646"/>
        <dbReference type="ChEBI" id="CHEBI:57540"/>
        <dbReference type="ChEBI" id="CHEBI:57945"/>
        <dbReference type="ChEBI" id="CHEBI:132124"/>
    </reaction>
</comment>
<comment type="subunit">
    <text evidence="1">NDH-1 is composed of 14 different subunits. Subunits NuoB, C, D, E, F, and G constitute the peripheral sector of the complex.</text>
</comment>
<comment type="subcellular location">
    <subcellularLocation>
        <location evidence="1">Cell inner membrane</location>
        <topology evidence="1">Peripheral membrane protein</topology>
        <orientation evidence="1">Cytoplasmic side</orientation>
    </subcellularLocation>
</comment>
<comment type="similarity">
    <text evidence="1">Belongs to the complex I 49 kDa subunit family.</text>
</comment>
<keyword id="KW-0997">Cell inner membrane</keyword>
<keyword id="KW-1003">Cell membrane</keyword>
<keyword id="KW-0472">Membrane</keyword>
<keyword id="KW-0520">NAD</keyword>
<keyword id="KW-0874">Quinone</keyword>
<keyword id="KW-1278">Translocase</keyword>
<keyword id="KW-0813">Transport</keyword>
<keyword id="KW-0830">Ubiquinone</keyword>
<accession>B2I787</accession>
<feature type="chain" id="PRO_0000371955" description="NADH-quinone oxidoreductase subunit D">
    <location>
        <begin position="1"/>
        <end position="435"/>
    </location>
</feature>
<reference key="1">
    <citation type="journal article" date="2010" name="J. Bacteriol.">
        <title>Whole genome sequences of two Xylella fastidiosa strains (M12 and M23) causing almond leaf scorch disease in California.</title>
        <authorList>
            <person name="Chen J."/>
            <person name="Xie G."/>
            <person name="Han S."/>
            <person name="Chertkov O."/>
            <person name="Sims D."/>
            <person name="Civerolo E.L."/>
        </authorList>
    </citation>
    <scope>NUCLEOTIDE SEQUENCE [LARGE SCALE GENOMIC DNA]</scope>
    <source>
        <strain>M23</strain>
    </source>
</reference>
<name>NUOD_XYLF2</name>
<organism>
    <name type="scientific">Xylella fastidiosa (strain M23)</name>
    <dbReference type="NCBI Taxonomy" id="405441"/>
    <lineage>
        <taxon>Bacteria</taxon>
        <taxon>Pseudomonadati</taxon>
        <taxon>Pseudomonadota</taxon>
        <taxon>Gammaproteobacteria</taxon>
        <taxon>Lysobacterales</taxon>
        <taxon>Lysobacteraceae</taxon>
        <taxon>Xylella</taxon>
    </lineage>
</organism>
<protein>
    <recommendedName>
        <fullName evidence="1">NADH-quinone oxidoreductase subunit D</fullName>
        <ecNumber evidence="1">7.1.1.-</ecNumber>
    </recommendedName>
    <alternativeName>
        <fullName evidence="1">NADH dehydrogenase I subunit D</fullName>
    </alternativeName>
    <alternativeName>
        <fullName evidence="1">NDH-1 subunit D</fullName>
    </alternativeName>
</protein>
<proteinExistence type="inferred from homology"/>
<dbReference type="EC" id="7.1.1.-" evidence="1"/>
<dbReference type="EMBL" id="CP001011">
    <property type="protein sequence ID" value="ACB91694.1"/>
    <property type="molecule type" value="Genomic_DNA"/>
</dbReference>
<dbReference type="RefSeq" id="WP_011097562.1">
    <property type="nucleotide sequence ID" value="NC_010577.1"/>
</dbReference>
<dbReference type="SMR" id="B2I787"/>
<dbReference type="KEGG" id="xfn:XfasM23_0243"/>
<dbReference type="HOGENOM" id="CLU_015134_1_1_6"/>
<dbReference type="Proteomes" id="UP000001698">
    <property type="component" value="Chromosome"/>
</dbReference>
<dbReference type="GO" id="GO:0005886">
    <property type="term" value="C:plasma membrane"/>
    <property type="evidence" value="ECO:0007669"/>
    <property type="project" value="UniProtKB-SubCell"/>
</dbReference>
<dbReference type="GO" id="GO:0051287">
    <property type="term" value="F:NAD binding"/>
    <property type="evidence" value="ECO:0007669"/>
    <property type="project" value="InterPro"/>
</dbReference>
<dbReference type="GO" id="GO:0050136">
    <property type="term" value="F:NADH:ubiquinone reductase (non-electrogenic) activity"/>
    <property type="evidence" value="ECO:0007669"/>
    <property type="project" value="UniProtKB-UniRule"/>
</dbReference>
<dbReference type="GO" id="GO:0048038">
    <property type="term" value="F:quinone binding"/>
    <property type="evidence" value="ECO:0007669"/>
    <property type="project" value="UniProtKB-KW"/>
</dbReference>
<dbReference type="FunFam" id="1.10.645.10:FF:000005">
    <property type="entry name" value="NADH-quinone oxidoreductase subunit D"/>
    <property type="match status" value="1"/>
</dbReference>
<dbReference type="Gene3D" id="1.10.645.10">
    <property type="entry name" value="Cytochrome-c3 Hydrogenase, chain B"/>
    <property type="match status" value="1"/>
</dbReference>
<dbReference type="HAMAP" id="MF_01358">
    <property type="entry name" value="NDH1_NuoD"/>
    <property type="match status" value="1"/>
</dbReference>
<dbReference type="InterPro" id="IPR001135">
    <property type="entry name" value="NADH_Q_OxRdtase_suD"/>
</dbReference>
<dbReference type="InterPro" id="IPR014029">
    <property type="entry name" value="NADH_UbQ_OxRdtase_49kDa_CS"/>
</dbReference>
<dbReference type="InterPro" id="IPR022885">
    <property type="entry name" value="NDH1_su_D/H"/>
</dbReference>
<dbReference type="InterPro" id="IPR029014">
    <property type="entry name" value="NiFe-Hase_large"/>
</dbReference>
<dbReference type="NCBIfam" id="TIGR01962">
    <property type="entry name" value="NuoD"/>
    <property type="match status" value="1"/>
</dbReference>
<dbReference type="NCBIfam" id="NF004739">
    <property type="entry name" value="PRK06075.1"/>
    <property type="match status" value="1"/>
</dbReference>
<dbReference type="PANTHER" id="PTHR11993:SF10">
    <property type="entry name" value="NADH DEHYDROGENASE [UBIQUINONE] IRON-SULFUR PROTEIN 2, MITOCHONDRIAL"/>
    <property type="match status" value="1"/>
</dbReference>
<dbReference type="PANTHER" id="PTHR11993">
    <property type="entry name" value="NADH-UBIQUINONE OXIDOREDUCTASE 49 KDA SUBUNIT"/>
    <property type="match status" value="1"/>
</dbReference>
<dbReference type="Pfam" id="PF00346">
    <property type="entry name" value="Complex1_49kDa"/>
    <property type="match status" value="1"/>
</dbReference>
<dbReference type="SUPFAM" id="SSF56762">
    <property type="entry name" value="HydB/Nqo4-like"/>
    <property type="match status" value="1"/>
</dbReference>
<dbReference type="PROSITE" id="PS00535">
    <property type="entry name" value="COMPLEX1_49K"/>
    <property type="match status" value="1"/>
</dbReference>
<gene>
    <name evidence="1" type="primary">nuoD</name>
    <name type="ordered locus">XfasM23_0243</name>
</gene>
<evidence type="ECO:0000255" key="1">
    <source>
        <dbReference type="HAMAP-Rule" id="MF_01358"/>
    </source>
</evidence>